<feature type="chain" id="PRO_0000240833" description="Putative ankyrin repeat domain-containing protein 19">
    <location>
        <begin position="1"/>
        <end position="264"/>
    </location>
</feature>
<feature type="repeat" description="ANK 1">
    <location>
        <begin position="67"/>
        <end position="96"/>
    </location>
</feature>
<feature type="repeat" description="ANK 2">
    <location>
        <begin position="100"/>
        <end position="129"/>
    </location>
</feature>
<feature type="repeat" description="ANK 3">
    <location>
        <begin position="133"/>
        <end position="162"/>
    </location>
</feature>
<feature type="repeat" description="ANK 4">
    <location>
        <begin position="166"/>
        <end position="195"/>
    </location>
</feature>
<feature type="repeat" description="ANK 5">
    <location>
        <begin position="199"/>
        <end position="228"/>
    </location>
</feature>
<accession>Q9H560</accession>
<accession>A8K853</accession>
<accession>Q17RD3</accession>
<dbReference type="EMBL" id="AK292218">
    <property type="protein sequence ID" value="BAF84907.1"/>
    <property type="molecule type" value="mRNA"/>
</dbReference>
<dbReference type="EMBL" id="AL136981">
    <property type="status" value="NOT_ANNOTATED_CDS"/>
    <property type="molecule type" value="Genomic_DNA"/>
</dbReference>
<dbReference type="EMBL" id="CH471089">
    <property type="protein sequence ID" value="EAW62830.1"/>
    <property type="molecule type" value="Genomic_DNA"/>
</dbReference>
<dbReference type="EMBL" id="BC038951">
    <property type="protein sequence ID" value="AAH38951.1"/>
    <property type="molecule type" value="mRNA"/>
</dbReference>
<dbReference type="EMBL" id="BC117367">
    <property type="protein sequence ID" value="AAI17368.1"/>
    <property type="molecule type" value="mRNA"/>
</dbReference>
<dbReference type="EMBL" id="BC171729">
    <property type="protein sequence ID" value="AAI71729.1"/>
    <property type="molecule type" value="mRNA"/>
</dbReference>
<dbReference type="SMR" id="Q9H560"/>
<dbReference type="iPTMnet" id="Q9H560"/>
<dbReference type="PhosphoSitePlus" id="Q9H560"/>
<dbReference type="BioMuta" id="HGNC:22567"/>
<dbReference type="DMDM" id="74752664"/>
<dbReference type="jPOST" id="Q9H560"/>
<dbReference type="MassIVE" id="Q9H560"/>
<dbReference type="PeptideAtlas" id="Q9H560"/>
<dbReference type="AGR" id="HGNC:22567"/>
<dbReference type="GeneCards" id="ANKRD19P"/>
<dbReference type="HGNC" id="HGNC:22567">
    <property type="gene designation" value="ANKRD19P"/>
</dbReference>
<dbReference type="neXtProt" id="NX_Q9H560"/>
<dbReference type="InParanoid" id="Q9H560"/>
<dbReference type="PAN-GO" id="Q9H560">
    <property type="GO annotations" value="0 GO annotations based on evolutionary models"/>
</dbReference>
<dbReference type="PhylomeDB" id="Q9H560"/>
<dbReference type="ChiTaRS" id="ANKRD19P">
    <property type="organism name" value="human"/>
</dbReference>
<dbReference type="Pharos" id="Q9H560">
    <property type="development level" value="Tdark"/>
</dbReference>
<dbReference type="Proteomes" id="UP000005640">
    <property type="component" value="Unplaced"/>
</dbReference>
<dbReference type="RNAct" id="Q9H560">
    <property type="molecule type" value="protein"/>
</dbReference>
<dbReference type="Gene3D" id="1.25.40.20">
    <property type="entry name" value="Ankyrin repeat-containing domain"/>
    <property type="match status" value="2"/>
</dbReference>
<dbReference type="InterPro" id="IPR050657">
    <property type="entry name" value="Ankyrin_repeat_domain"/>
</dbReference>
<dbReference type="InterPro" id="IPR002110">
    <property type="entry name" value="Ankyrin_rpt"/>
</dbReference>
<dbReference type="InterPro" id="IPR036770">
    <property type="entry name" value="Ankyrin_rpt-contain_sf"/>
</dbReference>
<dbReference type="PANTHER" id="PTHR24147">
    <property type="entry name" value="ANKYRIN REPEAT DOMAIN 36-RELATED"/>
    <property type="match status" value="1"/>
</dbReference>
<dbReference type="PANTHER" id="PTHR24147:SF64">
    <property type="entry name" value="ANKYRIN REPEAT DOMAIN-CONTAINING PROTEIN 19-RELATED"/>
    <property type="match status" value="1"/>
</dbReference>
<dbReference type="Pfam" id="PF00023">
    <property type="entry name" value="Ank"/>
    <property type="match status" value="1"/>
</dbReference>
<dbReference type="Pfam" id="PF12796">
    <property type="entry name" value="Ank_2"/>
    <property type="match status" value="2"/>
</dbReference>
<dbReference type="SMART" id="SM00248">
    <property type="entry name" value="ANK"/>
    <property type="match status" value="6"/>
</dbReference>
<dbReference type="SUPFAM" id="SSF48403">
    <property type="entry name" value="Ankyrin repeat"/>
    <property type="match status" value="1"/>
</dbReference>
<dbReference type="PROSITE" id="PS50297">
    <property type="entry name" value="ANK_REP_REGION"/>
    <property type="match status" value="1"/>
</dbReference>
<dbReference type="PROSITE" id="PS50088">
    <property type="entry name" value="ANK_REPEAT"/>
    <property type="match status" value="4"/>
</dbReference>
<protein>
    <recommendedName>
        <fullName>Putative ankyrin repeat domain-containing protein 19</fullName>
    </recommendedName>
    <alternativeName>
        <fullName>Ankyrin repeat domain-containing protein 19 pseudogene</fullName>
    </alternativeName>
</protein>
<reference key="1">
    <citation type="journal article" date="2004" name="Nat. Genet.">
        <title>Complete sequencing and characterization of 21,243 full-length human cDNAs.</title>
        <authorList>
            <person name="Ota T."/>
            <person name="Suzuki Y."/>
            <person name="Nishikawa T."/>
            <person name="Otsuki T."/>
            <person name="Sugiyama T."/>
            <person name="Irie R."/>
            <person name="Wakamatsu A."/>
            <person name="Hayashi K."/>
            <person name="Sato H."/>
            <person name="Nagai K."/>
            <person name="Kimura K."/>
            <person name="Makita H."/>
            <person name="Sekine M."/>
            <person name="Obayashi M."/>
            <person name="Nishi T."/>
            <person name="Shibahara T."/>
            <person name="Tanaka T."/>
            <person name="Ishii S."/>
            <person name="Yamamoto J."/>
            <person name="Saito K."/>
            <person name="Kawai Y."/>
            <person name="Isono Y."/>
            <person name="Nakamura Y."/>
            <person name="Nagahari K."/>
            <person name="Murakami K."/>
            <person name="Yasuda T."/>
            <person name="Iwayanagi T."/>
            <person name="Wagatsuma M."/>
            <person name="Shiratori A."/>
            <person name="Sudo H."/>
            <person name="Hosoiri T."/>
            <person name="Kaku Y."/>
            <person name="Kodaira H."/>
            <person name="Kondo H."/>
            <person name="Sugawara M."/>
            <person name="Takahashi M."/>
            <person name="Kanda K."/>
            <person name="Yokoi T."/>
            <person name="Furuya T."/>
            <person name="Kikkawa E."/>
            <person name="Omura Y."/>
            <person name="Abe K."/>
            <person name="Kamihara K."/>
            <person name="Katsuta N."/>
            <person name="Sato K."/>
            <person name="Tanikawa M."/>
            <person name="Yamazaki M."/>
            <person name="Ninomiya K."/>
            <person name="Ishibashi T."/>
            <person name="Yamashita H."/>
            <person name="Murakawa K."/>
            <person name="Fujimori K."/>
            <person name="Tanai H."/>
            <person name="Kimata M."/>
            <person name="Watanabe M."/>
            <person name="Hiraoka S."/>
            <person name="Chiba Y."/>
            <person name="Ishida S."/>
            <person name="Ono Y."/>
            <person name="Takiguchi S."/>
            <person name="Watanabe S."/>
            <person name="Yosida M."/>
            <person name="Hotuta T."/>
            <person name="Kusano J."/>
            <person name="Kanehori K."/>
            <person name="Takahashi-Fujii A."/>
            <person name="Hara H."/>
            <person name="Tanase T.-O."/>
            <person name="Nomura Y."/>
            <person name="Togiya S."/>
            <person name="Komai F."/>
            <person name="Hara R."/>
            <person name="Takeuchi K."/>
            <person name="Arita M."/>
            <person name="Imose N."/>
            <person name="Musashino K."/>
            <person name="Yuuki H."/>
            <person name="Oshima A."/>
            <person name="Sasaki N."/>
            <person name="Aotsuka S."/>
            <person name="Yoshikawa Y."/>
            <person name="Matsunawa H."/>
            <person name="Ichihara T."/>
            <person name="Shiohata N."/>
            <person name="Sano S."/>
            <person name="Moriya S."/>
            <person name="Momiyama H."/>
            <person name="Satoh N."/>
            <person name="Takami S."/>
            <person name="Terashima Y."/>
            <person name="Suzuki O."/>
            <person name="Nakagawa S."/>
            <person name="Senoh A."/>
            <person name="Mizoguchi H."/>
            <person name="Goto Y."/>
            <person name="Shimizu F."/>
            <person name="Wakebe H."/>
            <person name="Hishigaki H."/>
            <person name="Watanabe T."/>
            <person name="Sugiyama A."/>
            <person name="Takemoto M."/>
            <person name="Kawakami B."/>
            <person name="Yamazaki M."/>
            <person name="Watanabe K."/>
            <person name="Kumagai A."/>
            <person name="Itakura S."/>
            <person name="Fukuzumi Y."/>
            <person name="Fujimori Y."/>
            <person name="Komiyama M."/>
            <person name="Tashiro H."/>
            <person name="Tanigami A."/>
            <person name="Fujiwara T."/>
            <person name="Ono T."/>
            <person name="Yamada K."/>
            <person name="Fujii Y."/>
            <person name="Ozaki K."/>
            <person name="Hirao M."/>
            <person name="Ohmori Y."/>
            <person name="Kawabata A."/>
            <person name="Hikiji T."/>
            <person name="Kobatake N."/>
            <person name="Inagaki H."/>
            <person name="Ikema Y."/>
            <person name="Okamoto S."/>
            <person name="Okitani R."/>
            <person name="Kawakami T."/>
            <person name="Noguchi S."/>
            <person name="Itoh T."/>
            <person name="Shigeta K."/>
            <person name="Senba T."/>
            <person name="Matsumura K."/>
            <person name="Nakajima Y."/>
            <person name="Mizuno T."/>
            <person name="Morinaga M."/>
            <person name="Sasaki M."/>
            <person name="Togashi T."/>
            <person name="Oyama M."/>
            <person name="Hata H."/>
            <person name="Watanabe M."/>
            <person name="Komatsu T."/>
            <person name="Mizushima-Sugano J."/>
            <person name="Satoh T."/>
            <person name="Shirai Y."/>
            <person name="Takahashi Y."/>
            <person name="Nakagawa K."/>
            <person name="Okumura K."/>
            <person name="Nagase T."/>
            <person name="Nomura N."/>
            <person name="Kikuchi H."/>
            <person name="Masuho Y."/>
            <person name="Yamashita R."/>
            <person name="Nakai K."/>
            <person name="Yada T."/>
            <person name="Nakamura Y."/>
            <person name="Ohara O."/>
            <person name="Isogai T."/>
            <person name="Sugano S."/>
        </authorList>
    </citation>
    <scope>NUCLEOTIDE SEQUENCE [LARGE SCALE MRNA]</scope>
    <source>
        <tissue>Esophageal carcinoma</tissue>
    </source>
</reference>
<reference key="2">
    <citation type="journal article" date="2004" name="Nature">
        <title>DNA sequence and analysis of human chromosome 9.</title>
        <authorList>
            <person name="Humphray S.J."/>
            <person name="Oliver K."/>
            <person name="Hunt A.R."/>
            <person name="Plumb R.W."/>
            <person name="Loveland J.E."/>
            <person name="Howe K.L."/>
            <person name="Andrews T.D."/>
            <person name="Searle S."/>
            <person name="Hunt S.E."/>
            <person name="Scott C.E."/>
            <person name="Jones M.C."/>
            <person name="Ainscough R."/>
            <person name="Almeida J.P."/>
            <person name="Ambrose K.D."/>
            <person name="Ashwell R.I.S."/>
            <person name="Babbage A.K."/>
            <person name="Babbage S."/>
            <person name="Bagguley C.L."/>
            <person name="Bailey J."/>
            <person name="Banerjee R."/>
            <person name="Barker D.J."/>
            <person name="Barlow K.F."/>
            <person name="Bates K."/>
            <person name="Beasley H."/>
            <person name="Beasley O."/>
            <person name="Bird C.P."/>
            <person name="Bray-Allen S."/>
            <person name="Brown A.J."/>
            <person name="Brown J.Y."/>
            <person name="Burford D."/>
            <person name="Burrill W."/>
            <person name="Burton J."/>
            <person name="Carder C."/>
            <person name="Carter N.P."/>
            <person name="Chapman J.C."/>
            <person name="Chen Y."/>
            <person name="Clarke G."/>
            <person name="Clark S.Y."/>
            <person name="Clee C.M."/>
            <person name="Clegg S."/>
            <person name="Collier R.E."/>
            <person name="Corby N."/>
            <person name="Crosier M."/>
            <person name="Cummings A.T."/>
            <person name="Davies J."/>
            <person name="Dhami P."/>
            <person name="Dunn M."/>
            <person name="Dutta I."/>
            <person name="Dyer L.W."/>
            <person name="Earthrowl M.E."/>
            <person name="Faulkner L."/>
            <person name="Fleming C.J."/>
            <person name="Frankish A."/>
            <person name="Frankland J.A."/>
            <person name="French L."/>
            <person name="Fricker D.G."/>
            <person name="Garner P."/>
            <person name="Garnett J."/>
            <person name="Ghori J."/>
            <person name="Gilbert J.G.R."/>
            <person name="Glison C."/>
            <person name="Grafham D.V."/>
            <person name="Gribble S."/>
            <person name="Griffiths C."/>
            <person name="Griffiths-Jones S."/>
            <person name="Grocock R."/>
            <person name="Guy J."/>
            <person name="Hall R.E."/>
            <person name="Hammond S."/>
            <person name="Harley J.L."/>
            <person name="Harrison E.S.I."/>
            <person name="Hart E.A."/>
            <person name="Heath P.D."/>
            <person name="Henderson C.D."/>
            <person name="Hopkins B.L."/>
            <person name="Howard P.J."/>
            <person name="Howden P.J."/>
            <person name="Huckle E."/>
            <person name="Johnson C."/>
            <person name="Johnson D."/>
            <person name="Joy A.A."/>
            <person name="Kay M."/>
            <person name="Keenan S."/>
            <person name="Kershaw J.K."/>
            <person name="Kimberley A.M."/>
            <person name="King A."/>
            <person name="Knights A."/>
            <person name="Laird G.K."/>
            <person name="Langford C."/>
            <person name="Lawlor S."/>
            <person name="Leongamornlert D.A."/>
            <person name="Leversha M."/>
            <person name="Lloyd C."/>
            <person name="Lloyd D.M."/>
            <person name="Lovell J."/>
            <person name="Martin S."/>
            <person name="Mashreghi-Mohammadi M."/>
            <person name="Matthews L."/>
            <person name="McLaren S."/>
            <person name="McLay K.E."/>
            <person name="McMurray A."/>
            <person name="Milne S."/>
            <person name="Nickerson T."/>
            <person name="Nisbett J."/>
            <person name="Nordsiek G."/>
            <person name="Pearce A.V."/>
            <person name="Peck A.I."/>
            <person name="Porter K.M."/>
            <person name="Pandian R."/>
            <person name="Pelan S."/>
            <person name="Phillimore B."/>
            <person name="Povey S."/>
            <person name="Ramsey Y."/>
            <person name="Rand V."/>
            <person name="Scharfe M."/>
            <person name="Sehra H.K."/>
            <person name="Shownkeen R."/>
            <person name="Sims S.K."/>
            <person name="Skuce C.D."/>
            <person name="Smith M."/>
            <person name="Steward C.A."/>
            <person name="Swarbreck D."/>
            <person name="Sycamore N."/>
            <person name="Tester J."/>
            <person name="Thorpe A."/>
            <person name="Tracey A."/>
            <person name="Tromans A."/>
            <person name="Thomas D.W."/>
            <person name="Wall M."/>
            <person name="Wallis J.M."/>
            <person name="West A.P."/>
            <person name="Whitehead S.L."/>
            <person name="Willey D.L."/>
            <person name="Williams S.A."/>
            <person name="Wilming L."/>
            <person name="Wray P.W."/>
            <person name="Young L."/>
            <person name="Ashurst J.L."/>
            <person name="Coulson A."/>
            <person name="Blocker H."/>
            <person name="Durbin R.M."/>
            <person name="Sulston J.E."/>
            <person name="Hubbard T."/>
            <person name="Jackson M.J."/>
            <person name="Bentley D.R."/>
            <person name="Beck S."/>
            <person name="Rogers J."/>
            <person name="Dunham I."/>
        </authorList>
    </citation>
    <scope>NUCLEOTIDE SEQUENCE [LARGE SCALE GENOMIC DNA]</scope>
</reference>
<reference key="3">
    <citation type="submission" date="2005-07" db="EMBL/GenBank/DDBJ databases">
        <authorList>
            <person name="Mural R.J."/>
            <person name="Istrail S."/>
            <person name="Sutton G.G."/>
            <person name="Florea L."/>
            <person name="Halpern A.L."/>
            <person name="Mobarry C.M."/>
            <person name="Lippert R."/>
            <person name="Walenz B."/>
            <person name="Shatkay H."/>
            <person name="Dew I."/>
            <person name="Miller J.R."/>
            <person name="Flanigan M.J."/>
            <person name="Edwards N.J."/>
            <person name="Bolanos R."/>
            <person name="Fasulo D."/>
            <person name="Halldorsson B.V."/>
            <person name="Hannenhalli S."/>
            <person name="Turner R."/>
            <person name="Yooseph S."/>
            <person name="Lu F."/>
            <person name="Nusskern D.R."/>
            <person name="Shue B.C."/>
            <person name="Zheng X.H."/>
            <person name="Zhong F."/>
            <person name="Delcher A.L."/>
            <person name="Huson D.H."/>
            <person name="Kravitz S.A."/>
            <person name="Mouchard L."/>
            <person name="Reinert K."/>
            <person name="Remington K.A."/>
            <person name="Clark A.G."/>
            <person name="Waterman M.S."/>
            <person name="Eichler E.E."/>
            <person name="Adams M.D."/>
            <person name="Hunkapiller M.W."/>
            <person name="Myers E.W."/>
            <person name="Venter J.C."/>
        </authorList>
    </citation>
    <scope>NUCLEOTIDE SEQUENCE [LARGE SCALE GENOMIC DNA]</scope>
</reference>
<reference key="4">
    <citation type="journal article" date="2004" name="Genome Res.">
        <title>The status, quality, and expansion of the NIH full-length cDNA project: the Mammalian Gene Collection (MGC).</title>
        <authorList>
            <consortium name="The MGC Project Team"/>
        </authorList>
    </citation>
    <scope>NUCLEOTIDE SEQUENCE [LARGE SCALE MRNA]</scope>
    <source>
        <tissue>Hippocampus</tissue>
    </source>
</reference>
<proteinExistence type="uncertain"/>
<sequence length="264" mass="30436">MRKLFSFGRRLGQALLDSMDQEYAGRGYHIRDWELRKIHRAAIKGDAAEVEHCLTRRFRDLDARDRKDRTVLHLTCAHGRVEVVTLLLSRRCQINIYDRLNRTPLMKAVHCQEEACAIILLEHGANPNIKDIYSNTALHYAVYNKGTSLAEKLLSHHANIEALNEEGNTPLLFAINSRRQQIVEFLLKNQANLHAIDNFRRTALMLAVQHNSSSIVSLLLQQNINIFSQDLFGQTAEDYAVCYNFRSIQQQILEHKNKILKSHL</sequence>
<name>ANR19_HUMAN</name>
<evidence type="ECO:0000305" key="1"/>
<comment type="caution">
    <text evidence="1">Could be the product of a pseudogene.</text>
</comment>
<keyword id="KW-0040">ANK repeat</keyword>
<keyword id="KW-1185">Reference proteome</keyword>
<keyword id="KW-0677">Repeat</keyword>
<organism>
    <name type="scientific">Homo sapiens</name>
    <name type="common">Human</name>
    <dbReference type="NCBI Taxonomy" id="9606"/>
    <lineage>
        <taxon>Eukaryota</taxon>
        <taxon>Metazoa</taxon>
        <taxon>Chordata</taxon>
        <taxon>Craniata</taxon>
        <taxon>Vertebrata</taxon>
        <taxon>Euteleostomi</taxon>
        <taxon>Mammalia</taxon>
        <taxon>Eutheria</taxon>
        <taxon>Euarchontoglires</taxon>
        <taxon>Primates</taxon>
        <taxon>Haplorrhini</taxon>
        <taxon>Catarrhini</taxon>
        <taxon>Hominidae</taxon>
        <taxon>Homo</taxon>
    </lineage>
</organism>
<gene>
    <name type="primary">ANKRD19P</name>
    <name type="synonym">ANKRD19</name>
</gene>